<feature type="chain" id="PRO_0000458492" description="Ciliary microtubule inner protein 2A">
    <location>
        <begin position="1"/>
        <end position="320"/>
    </location>
</feature>
<comment type="function">
    <text evidence="1 2">Microtubule inner protein (MIP) part of the dynein-decorated doublet microtubules (DMTs) in flagellum axoneme (PubMed:37327785). Binds to the intra-tubulin interfaces (By similarity).</text>
</comment>
<comment type="subunit">
    <text evidence="2">Microtubule inner protein component of sperm flagellar doublet microtubules.</text>
</comment>
<comment type="subcellular location">
    <subcellularLocation>
        <location evidence="2">Cytoplasm</location>
        <location evidence="2">Cytoskeleton</location>
        <location evidence="2">Flagellum axoneme</location>
    </subcellularLocation>
</comment>
<comment type="tissue specificity">
    <text evidence="2">Expressed in sperm.</text>
</comment>
<comment type="similarity">
    <text evidence="3">Belongs to the CIMIP2 family.</text>
</comment>
<evidence type="ECO:0000250" key="1">
    <source>
        <dbReference type="UniProtKB" id="Q9D4K5"/>
    </source>
</evidence>
<evidence type="ECO:0000269" key="2">
    <source>
    </source>
</evidence>
<evidence type="ECO:0000305" key="3"/>
<evidence type="ECO:0000312" key="4">
    <source>
        <dbReference type="Proteomes" id="UP000009136"/>
    </source>
</evidence>
<evidence type="ECO:0000312" key="5">
    <source>
        <dbReference type="VGNC" id="VGNC:28748"/>
    </source>
</evidence>
<evidence type="ECO:0007744" key="6">
    <source>
        <dbReference type="PDB" id="8OTZ"/>
    </source>
</evidence>
<name>CMI2A_BOVIN</name>
<accession>G3X6E2</accession>
<reference evidence="4" key="1">
    <citation type="submission" date="2018-03" db="EMBL/GenBank/DDBJ databases">
        <title>ARS-UCD1.2.</title>
        <authorList>
            <person name="Rosen B.D."/>
            <person name="Bickhart D.M."/>
            <person name="Koren S."/>
            <person name="Schnabel R.D."/>
            <person name="Hall R."/>
            <person name="Zimin A."/>
            <person name="Dreischer C."/>
            <person name="Schultheiss S."/>
            <person name="Schroeder S.G."/>
            <person name="Elsik C.G."/>
            <person name="Couldrey C."/>
            <person name="Liu G.E."/>
            <person name="Van Tassell C.P."/>
            <person name="Phillippy A.M."/>
            <person name="Smith T.P.L."/>
            <person name="Medrano J.F."/>
        </authorList>
    </citation>
    <scope>NUCLEOTIDE SEQUENCE [LARGE SCALE GENOMIC DNA]</scope>
    <source>
        <strain evidence="4">Hereford</strain>
    </source>
</reference>
<reference evidence="6" key="2">
    <citation type="journal article" date="2023" name="Cell">
        <title>Structural specializations of the sperm tail.</title>
        <authorList>
            <person name="Leung M.R."/>
            <person name="Zeng J."/>
            <person name="Wang X."/>
            <person name="Roelofs M.C."/>
            <person name="Huang W."/>
            <person name="Zenezini Chiozzi R."/>
            <person name="Hevler J.F."/>
            <person name="Heck A.J.R."/>
            <person name="Dutcher S.K."/>
            <person name="Brown A."/>
            <person name="Zhang R."/>
            <person name="Zeev-Ben-Mordehai T."/>
        </authorList>
    </citation>
    <scope>STRUCTURE BY ELECTRON MICROSCOPY (3.60 ANGSTROMS)</scope>
    <scope>FUNCTION</scope>
    <scope>SUBUNIT</scope>
    <scope>SUBCELLULAR LOCATION</scope>
    <scope>TISSUE SPECIFICITY</scope>
</reference>
<sequence length="320" mass="36204">MTAPQKHNLFSPEPHYIPGYAGFYPQLRYRVGDTYGRTTAQLLTDPSVQKSPCSVLAPVAKPKFIEDFSKPKPPFVPCRDLIEPYIPHYTGLKPYKNFEMLGRFPPQEADAQGSLGGENVSRQVPLPAGFMPYPPYAPCPPGRKGDSRDLGHPGLRLALGEEAWKSTAPACEAPGQYQLYHCRRDESPPLAHWQETLDVGRFHRLPQLGHPKLIQRKAISGYAGFVPRFAWVMGMNYRDGVTQAMDEFDKSQFLLRNPICALGERLPSTHWPSNTIYRSQGLIPFYMGFIPSMQDNYALTFGNSTRKAYQKELERRSRTL</sequence>
<keyword id="KW-0002">3D-structure</keyword>
<keyword id="KW-0966">Cell projection</keyword>
<keyword id="KW-0969">Cilium</keyword>
<keyword id="KW-0963">Cytoplasm</keyword>
<keyword id="KW-0206">Cytoskeleton</keyword>
<keyword id="KW-0282">Flagellum</keyword>
<keyword id="KW-1185">Reference proteome</keyword>
<organism evidence="4">
    <name type="scientific">Bos taurus</name>
    <name type="common">Bovine</name>
    <dbReference type="NCBI Taxonomy" id="9913"/>
    <lineage>
        <taxon>Eukaryota</taxon>
        <taxon>Metazoa</taxon>
        <taxon>Chordata</taxon>
        <taxon>Craniata</taxon>
        <taxon>Vertebrata</taxon>
        <taxon>Euteleostomi</taxon>
        <taxon>Mammalia</taxon>
        <taxon>Eutheria</taxon>
        <taxon>Laurasiatheria</taxon>
        <taxon>Artiodactyla</taxon>
        <taxon>Ruminantia</taxon>
        <taxon>Pecora</taxon>
        <taxon>Bovidae</taxon>
        <taxon>Bovinae</taxon>
        <taxon>Bos</taxon>
    </lineage>
</organism>
<proteinExistence type="evidence at protein level"/>
<gene>
    <name type="primary">CIMIP2A</name>
    <name evidence="5" type="synonym">FAM166A</name>
</gene>
<protein>
    <recommendedName>
        <fullName evidence="3">Ciliary microtubule inner protein 2A</fullName>
    </recommendedName>
</protein>
<dbReference type="PDB" id="8OTZ">
    <property type="method" value="EM"/>
    <property type="resolution" value="3.60 A"/>
    <property type="chains" value="Al/Am/An/Ao/B7/BY/BZ/Ba/Bb/Bc/Bd/Be/CN/CO=1-320"/>
</dbReference>
<dbReference type="PDBsum" id="8OTZ"/>
<dbReference type="EMDB" id="EMD-17187"/>
<dbReference type="EMDB" id="EMD-50664"/>
<dbReference type="FunCoup" id="G3X6E2">
    <property type="interactions" value="75"/>
</dbReference>
<dbReference type="PaxDb" id="9913-ENSBTAP00000005347"/>
<dbReference type="Ensembl" id="ENSBTAT00000005347.6">
    <property type="protein sequence ID" value="ENSBTAP00000005347.4"/>
    <property type="gene ID" value="ENSBTAG00000004095.6"/>
</dbReference>
<dbReference type="VEuPathDB" id="HostDB:ENSBTAG00000004095"/>
<dbReference type="VGNC" id="VGNC:28748">
    <property type="gene designation" value="CIMIP2A"/>
</dbReference>
<dbReference type="eggNOG" id="ENOG502QSNH">
    <property type="taxonomic scope" value="Eukaryota"/>
</dbReference>
<dbReference type="GeneTree" id="ENSGT00730000111343"/>
<dbReference type="HOGENOM" id="CLU_076252_0_0_1"/>
<dbReference type="InParanoid" id="G3X6E2"/>
<dbReference type="OMA" id="FRNPHCD"/>
<dbReference type="TreeFam" id="TF336316"/>
<dbReference type="Proteomes" id="UP000009136">
    <property type="component" value="Chromosome 11"/>
</dbReference>
<dbReference type="Bgee" id="ENSBTAG00000004095">
    <property type="expression patterns" value="Expressed in semen and 9 other cell types or tissues"/>
</dbReference>
<dbReference type="GO" id="GO:0160111">
    <property type="term" value="C:axonemal A tubule inner sheath"/>
    <property type="evidence" value="ECO:0000250"/>
    <property type="project" value="UniProtKB"/>
</dbReference>
<dbReference type="GO" id="GO:0036064">
    <property type="term" value="C:ciliary basal body"/>
    <property type="evidence" value="ECO:0007669"/>
    <property type="project" value="Ensembl"/>
</dbReference>
<dbReference type="GO" id="GO:0036126">
    <property type="term" value="C:sperm flagellum"/>
    <property type="evidence" value="ECO:0000250"/>
    <property type="project" value="UniProtKB"/>
</dbReference>
<dbReference type="GO" id="GO:0030317">
    <property type="term" value="P:flagellated sperm motility"/>
    <property type="evidence" value="ECO:0000250"/>
    <property type="project" value="UniProtKB"/>
</dbReference>
<dbReference type="InterPro" id="IPR052683">
    <property type="entry name" value="CIMIP2A"/>
</dbReference>
<dbReference type="InterPro" id="IPR018902">
    <property type="entry name" value="CMI2A-C-like_dom"/>
</dbReference>
<dbReference type="PANTHER" id="PTHR47299">
    <property type="entry name" value="PROTEIN FAM166A"/>
    <property type="match status" value="1"/>
</dbReference>
<dbReference type="PANTHER" id="PTHR47299:SF1">
    <property type="entry name" value="PROTEIN FAM166A"/>
    <property type="match status" value="1"/>
</dbReference>
<dbReference type="Pfam" id="PF10629">
    <property type="entry name" value="CMI2B-like"/>
    <property type="match status" value="2"/>
</dbReference>